<proteinExistence type="inferred from homology"/>
<gene>
    <name evidence="1" type="primary">pnp</name>
    <name type="ordered locus">ACL_0808</name>
</gene>
<dbReference type="EC" id="2.7.7.8" evidence="1"/>
<dbReference type="EMBL" id="CP000896">
    <property type="protein sequence ID" value="ABX81422.1"/>
    <property type="molecule type" value="Genomic_DNA"/>
</dbReference>
<dbReference type="RefSeq" id="WP_012242753.1">
    <property type="nucleotide sequence ID" value="NC_010163.1"/>
</dbReference>
<dbReference type="SMR" id="A9NGE2"/>
<dbReference type="STRING" id="441768.ACL_0808"/>
<dbReference type="GeneID" id="41338964"/>
<dbReference type="KEGG" id="acl:ACL_0808"/>
<dbReference type="eggNOG" id="COG1185">
    <property type="taxonomic scope" value="Bacteria"/>
</dbReference>
<dbReference type="HOGENOM" id="CLU_004217_2_2_14"/>
<dbReference type="OrthoDB" id="9804305at2"/>
<dbReference type="Proteomes" id="UP000008558">
    <property type="component" value="Chromosome"/>
</dbReference>
<dbReference type="GO" id="GO:0005829">
    <property type="term" value="C:cytosol"/>
    <property type="evidence" value="ECO:0007669"/>
    <property type="project" value="TreeGrafter"/>
</dbReference>
<dbReference type="GO" id="GO:0000175">
    <property type="term" value="F:3'-5'-RNA exonuclease activity"/>
    <property type="evidence" value="ECO:0007669"/>
    <property type="project" value="TreeGrafter"/>
</dbReference>
<dbReference type="GO" id="GO:0000287">
    <property type="term" value="F:magnesium ion binding"/>
    <property type="evidence" value="ECO:0007669"/>
    <property type="project" value="UniProtKB-UniRule"/>
</dbReference>
<dbReference type="GO" id="GO:0004654">
    <property type="term" value="F:polyribonucleotide nucleotidyltransferase activity"/>
    <property type="evidence" value="ECO:0007669"/>
    <property type="project" value="UniProtKB-UniRule"/>
</dbReference>
<dbReference type="GO" id="GO:0003723">
    <property type="term" value="F:RNA binding"/>
    <property type="evidence" value="ECO:0007669"/>
    <property type="project" value="UniProtKB-UniRule"/>
</dbReference>
<dbReference type="GO" id="GO:0006402">
    <property type="term" value="P:mRNA catabolic process"/>
    <property type="evidence" value="ECO:0007669"/>
    <property type="project" value="UniProtKB-UniRule"/>
</dbReference>
<dbReference type="GO" id="GO:0006396">
    <property type="term" value="P:RNA processing"/>
    <property type="evidence" value="ECO:0007669"/>
    <property type="project" value="InterPro"/>
</dbReference>
<dbReference type="CDD" id="cd02393">
    <property type="entry name" value="KH-I_PNPase"/>
    <property type="match status" value="1"/>
</dbReference>
<dbReference type="CDD" id="cd11363">
    <property type="entry name" value="RNase_PH_PNPase_1"/>
    <property type="match status" value="1"/>
</dbReference>
<dbReference type="CDD" id="cd11364">
    <property type="entry name" value="RNase_PH_PNPase_2"/>
    <property type="match status" value="1"/>
</dbReference>
<dbReference type="FunFam" id="3.30.1370.10:FF:000001">
    <property type="entry name" value="Polyribonucleotide nucleotidyltransferase"/>
    <property type="match status" value="1"/>
</dbReference>
<dbReference type="FunFam" id="3.30.230.70:FF:000001">
    <property type="entry name" value="Polyribonucleotide nucleotidyltransferase"/>
    <property type="match status" value="1"/>
</dbReference>
<dbReference type="FunFam" id="3.30.230.70:FF:000002">
    <property type="entry name" value="Polyribonucleotide nucleotidyltransferase"/>
    <property type="match status" value="1"/>
</dbReference>
<dbReference type="Gene3D" id="3.30.230.70">
    <property type="entry name" value="GHMP Kinase, N-terminal domain"/>
    <property type="match status" value="2"/>
</dbReference>
<dbReference type="Gene3D" id="3.30.1370.10">
    <property type="entry name" value="K Homology domain, type 1"/>
    <property type="match status" value="1"/>
</dbReference>
<dbReference type="Gene3D" id="2.40.50.140">
    <property type="entry name" value="Nucleic acid-binding proteins"/>
    <property type="match status" value="1"/>
</dbReference>
<dbReference type="HAMAP" id="MF_01595">
    <property type="entry name" value="PNPase"/>
    <property type="match status" value="1"/>
</dbReference>
<dbReference type="InterPro" id="IPR001247">
    <property type="entry name" value="ExoRNase_PH_dom1"/>
</dbReference>
<dbReference type="InterPro" id="IPR015847">
    <property type="entry name" value="ExoRNase_PH_dom2"/>
</dbReference>
<dbReference type="InterPro" id="IPR036345">
    <property type="entry name" value="ExoRNase_PH_dom2_sf"/>
</dbReference>
<dbReference type="InterPro" id="IPR004087">
    <property type="entry name" value="KH_dom"/>
</dbReference>
<dbReference type="InterPro" id="IPR004088">
    <property type="entry name" value="KH_dom_type_1"/>
</dbReference>
<dbReference type="InterPro" id="IPR036612">
    <property type="entry name" value="KH_dom_type_1_sf"/>
</dbReference>
<dbReference type="InterPro" id="IPR012340">
    <property type="entry name" value="NA-bd_OB-fold"/>
</dbReference>
<dbReference type="InterPro" id="IPR012162">
    <property type="entry name" value="PNPase"/>
</dbReference>
<dbReference type="InterPro" id="IPR027408">
    <property type="entry name" value="PNPase/RNase_PH_dom_sf"/>
</dbReference>
<dbReference type="InterPro" id="IPR015848">
    <property type="entry name" value="PNPase_PH_RNA-bd_bac/org-type"/>
</dbReference>
<dbReference type="InterPro" id="IPR036456">
    <property type="entry name" value="PNPase_PH_RNA-bd_sf"/>
</dbReference>
<dbReference type="InterPro" id="IPR020568">
    <property type="entry name" value="Ribosomal_Su5_D2-typ_SF"/>
</dbReference>
<dbReference type="InterPro" id="IPR003029">
    <property type="entry name" value="S1_domain"/>
</dbReference>
<dbReference type="NCBIfam" id="TIGR03591">
    <property type="entry name" value="polynuc_phos"/>
    <property type="match status" value="1"/>
</dbReference>
<dbReference type="NCBIfam" id="NF008805">
    <property type="entry name" value="PRK11824.1"/>
    <property type="match status" value="1"/>
</dbReference>
<dbReference type="PANTHER" id="PTHR11252">
    <property type="entry name" value="POLYRIBONUCLEOTIDE NUCLEOTIDYLTRANSFERASE"/>
    <property type="match status" value="1"/>
</dbReference>
<dbReference type="PANTHER" id="PTHR11252:SF0">
    <property type="entry name" value="POLYRIBONUCLEOTIDE NUCLEOTIDYLTRANSFERASE 1, MITOCHONDRIAL"/>
    <property type="match status" value="1"/>
</dbReference>
<dbReference type="Pfam" id="PF00013">
    <property type="entry name" value="KH_1"/>
    <property type="match status" value="1"/>
</dbReference>
<dbReference type="Pfam" id="PF03726">
    <property type="entry name" value="PNPase"/>
    <property type="match status" value="1"/>
</dbReference>
<dbReference type="Pfam" id="PF01138">
    <property type="entry name" value="RNase_PH"/>
    <property type="match status" value="2"/>
</dbReference>
<dbReference type="Pfam" id="PF03725">
    <property type="entry name" value="RNase_PH_C"/>
    <property type="match status" value="2"/>
</dbReference>
<dbReference type="Pfam" id="PF00575">
    <property type="entry name" value="S1"/>
    <property type="match status" value="1"/>
</dbReference>
<dbReference type="PIRSF" id="PIRSF005499">
    <property type="entry name" value="PNPase"/>
    <property type="match status" value="1"/>
</dbReference>
<dbReference type="SMART" id="SM00322">
    <property type="entry name" value="KH"/>
    <property type="match status" value="1"/>
</dbReference>
<dbReference type="SMART" id="SM00316">
    <property type="entry name" value="S1"/>
    <property type="match status" value="1"/>
</dbReference>
<dbReference type="SUPFAM" id="SSF54791">
    <property type="entry name" value="Eukaryotic type KH-domain (KH-domain type I)"/>
    <property type="match status" value="1"/>
</dbReference>
<dbReference type="SUPFAM" id="SSF50249">
    <property type="entry name" value="Nucleic acid-binding proteins"/>
    <property type="match status" value="1"/>
</dbReference>
<dbReference type="SUPFAM" id="SSF46915">
    <property type="entry name" value="Polynucleotide phosphorylase/guanosine pentaphosphate synthase (PNPase/GPSI), domain 3"/>
    <property type="match status" value="1"/>
</dbReference>
<dbReference type="SUPFAM" id="SSF55666">
    <property type="entry name" value="Ribonuclease PH domain 2-like"/>
    <property type="match status" value="2"/>
</dbReference>
<dbReference type="SUPFAM" id="SSF54211">
    <property type="entry name" value="Ribosomal protein S5 domain 2-like"/>
    <property type="match status" value="2"/>
</dbReference>
<dbReference type="PROSITE" id="PS50126">
    <property type="entry name" value="S1"/>
    <property type="match status" value="1"/>
</dbReference>
<name>PNP_ACHLI</name>
<accession>A9NGE2</accession>
<feature type="chain" id="PRO_0000329476" description="Polyribonucleotide nucleotidyltransferase">
    <location>
        <begin position="1"/>
        <end position="715"/>
    </location>
</feature>
<feature type="domain" description="KH" evidence="1">
    <location>
        <begin position="567"/>
        <end position="634"/>
    </location>
</feature>
<feature type="domain" description="S1 motif" evidence="1">
    <location>
        <begin position="637"/>
        <end position="712"/>
    </location>
</feature>
<feature type="binding site" evidence="1">
    <location>
        <position position="500"/>
    </location>
    <ligand>
        <name>Mg(2+)</name>
        <dbReference type="ChEBI" id="CHEBI:18420"/>
    </ligand>
</feature>
<feature type="binding site" evidence="1">
    <location>
        <position position="506"/>
    </location>
    <ligand>
        <name>Mg(2+)</name>
        <dbReference type="ChEBI" id="CHEBI:18420"/>
    </ligand>
</feature>
<protein>
    <recommendedName>
        <fullName evidence="1">Polyribonucleotide nucleotidyltransferase</fullName>
        <ecNumber evidence="1">2.7.7.8</ecNumber>
    </recommendedName>
    <alternativeName>
        <fullName evidence="1">Polynucleotide phosphorylase</fullName>
        <shortName evidence="1">PNPase</shortName>
    </alternativeName>
</protein>
<reference key="1">
    <citation type="journal article" date="2011" name="J. Bacteriol.">
        <title>Complete genome and proteome of Acholeplasma laidlawii.</title>
        <authorList>
            <person name="Lazarev V.N."/>
            <person name="Levitskii S.A."/>
            <person name="Basovskii Y.I."/>
            <person name="Chukin M.M."/>
            <person name="Akopian T.A."/>
            <person name="Vereshchagin V.V."/>
            <person name="Kostrjukova E.S."/>
            <person name="Kovaleva G.Y."/>
            <person name="Kazanov M.D."/>
            <person name="Malko D.B."/>
            <person name="Vitreschak A.G."/>
            <person name="Sernova N.V."/>
            <person name="Gelfand M.S."/>
            <person name="Demina I.A."/>
            <person name="Serebryakova M.V."/>
            <person name="Galyamina M.A."/>
            <person name="Vtyurin N.N."/>
            <person name="Rogov S.I."/>
            <person name="Alexeev D.G."/>
            <person name="Ladygina V.G."/>
            <person name="Govorun V.M."/>
        </authorList>
    </citation>
    <scope>NUCLEOTIDE SEQUENCE [LARGE SCALE GENOMIC DNA]</scope>
    <source>
        <strain>PG-8A</strain>
    </source>
</reference>
<evidence type="ECO:0000255" key="1">
    <source>
        <dbReference type="HAMAP-Rule" id="MF_01595"/>
    </source>
</evidence>
<keyword id="KW-0963">Cytoplasm</keyword>
<keyword id="KW-0460">Magnesium</keyword>
<keyword id="KW-0479">Metal-binding</keyword>
<keyword id="KW-0548">Nucleotidyltransferase</keyword>
<keyword id="KW-1185">Reference proteome</keyword>
<keyword id="KW-0694">RNA-binding</keyword>
<keyword id="KW-0808">Transferase</keyword>
<sequence length="715" mass="78666">MSKQVFETTLAGKPLRVEVGEIAKQANGAAMIYYGDTVVLSTAVAKAKVGQTDFFPLMVIYAEKQYAAGKIPGGFFRREGRPSEVETLTSRLIDRPLRPLFDDGYRNEVQVVNTVLSSDPEASSQMAAMLGSSIALEISNIPFMGPIAGAHVGRIDGQFVLNPSSEQLNVSDIDLIVAGTKDAINMVEAGAKQVSEEVMLEAILFGHEAIKELCAFQETIKKAFGVEKVEPELLSLNQAIFDEVFAYKGKELVKAVSLVDKQERYDVIDAIKDEVVAHFEQRNFWMTVDGKEVLDADQKKELMNQVKVSLDRIVTKEVRRLITEDKVRPDGRGLDEIRPLASSVDLLPRTHGSALFTRGQTQALGIVTLGSLNENQIIDGLEQETVTKRFMLHYNFPPFSVGETGRYGAPGRREIGHGALGERALLQVLPSEDEFPYAIRVVSEITESNGSSSQATICVGSMALMAAGVPIKAPVAGIAMGLIMDGEHYSILSDIQGMEDHEGDMDFKVAGTKDGITALQMDIKIQGITTEIMKEALEQARKGRLHILSHMNTVISETRTELSAFAPKVKMIRINPDKIRDVIGAGGKIITQIIEDHNNVKIDIEQDGRVFIMHTDSAWLNKTAAYIESLVREAKVGELYEAKVTRLLMDKDGKKIQGVFAEIFPGTEGLVHISKWEKERTESLDGKVKVGDQILVKVVKIDERGRVDLSRKDAL</sequence>
<organism>
    <name type="scientific">Acholeplasma laidlawii (strain PG-8A)</name>
    <dbReference type="NCBI Taxonomy" id="441768"/>
    <lineage>
        <taxon>Bacteria</taxon>
        <taxon>Bacillati</taxon>
        <taxon>Mycoplasmatota</taxon>
        <taxon>Mollicutes</taxon>
        <taxon>Acholeplasmatales</taxon>
        <taxon>Acholeplasmataceae</taxon>
        <taxon>Acholeplasma</taxon>
    </lineage>
</organism>
<comment type="function">
    <text evidence="1">Involved in mRNA degradation. Catalyzes the phosphorolysis of single-stranded polyribonucleotides processively in the 3'- to 5'-direction.</text>
</comment>
<comment type="catalytic activity">
    <reaction evidence="1">
        <text>RNA(n+1) + phosphate = RNA(n) + a ribonucleoside 5'-diphosphate</text>
        <dbReference type="Rhea" id="RHEA:22096"/>
        <dbReference type="Rhea" id="RHEA-COMP:14527"/>
        <dbReference type="Rhea" id="RHEA-COMP:17342"/>
        <dbReference type="ChEBI" id="CHEBI:43474"/>
        <dbReference type="ChEBI" id="CHEBI:57930"/>
        <dbReference type="ChEBI" id="CHEBI:140395"/>
        <dbReference type="EC" id="2.7.7.8"/>
    </reaction>
</comment>
<comment type="cofactor">
    <cofactor evidence="1">
        <name>Mg(2+)</name>
        <dbReference type="ChEBI" id="CHEBI:18420"/>
    </cofactor>
</comment>
<comment type="subcellular location">
    <subcellularLocation>
        <location evidence="1">Cytoplasm</location>
    </subcellularLocation>
</comment>
<comment type="similarity">
    <text evidence="1">Belongs to the polyribonucleotide nucleotidyltransferase family.</text>
</comment>